<keyword id="KW-0134">Cell wall</keyword>
<keyword id="KW-0378">Hydrolase</keyword>
<keyword id="KW-0572">Peptidoglycan-anchor</keyword>
<keyword id="KW-0645">Protease</keyword>
<keyword id="KW-0677">Repeat</keyword>
<keyword id="KW-0964">Secreted</keyword>
<keyword id="KW-0720">Serine protease</keyword>
<keyword id="KW-0732">Signal</keyword>
<keyword id="KW-0843">Virulence</keyword>
<name>C5AP_STRP3</name>
<proteinExistence type="inferred from homology"/>
<evidence type="ECO:0000250" key="1"/>
<evidence type="ECO:0000250" key="2">
    <source>
        <dbReference type="UniProtKB" id="P15926"/>
    </source>
</evidence>
<evidence type="ECO:0000250" key="3">
    <source>
        <dbReference type="UniProtKB" id="P58099"/>
    </source>
</evidence>
<evidence type="ECO:0000255" key="4">
    <source>
        <dbReference type="PROSITE-ProRule" id="PRU00477"/>
    </source>
</evidence>
<evidence type="ECO:0000255" key="5">
    <source>
        <dbReference type="PROSITE-ProRule" id="PRU01240"/>
    </source>
</evidence>
<evidence type="ECO:0000256" key="6">
    <source>
        <dbReference type="SAM" id="MobiDB-lite"/>
    </source>
</evidence>
<evidence type="ECO:0000305" key="7"/>
<gene>
    <name type="primary">scpA</name>
    <name type="ordered locus">SpyM3_1726</name>
</gene>
<feature type="signal peptide" evidence="2">
    <location>
        <begin position="1"/>
        <end position="31"/>
    </location>
</feature>
<feature type="chain" id="PRO_0000027155" description="C5a peptidase" evidence="1">
    <location>
        <begin position="32"/>
        <end position="1132"/>
    </location>
</feature>
<feature type="propeptide" id="PRO_0000027156" description="Removed by sortase" evidence="4">
    <location>
        <begin position="1133"/>
        <end position="1169"/>
    </location>
</feature>
<feature type="domain" description="Peptidase S8" evidence="5">
    <location>
        <begin position="101"/>
        <end position="583"/>
    </location>
</feature>
<feature type="repeat" description="1">
    <location>
        <begin position="1036"/>
        <end position="1052"/>
    </location>
</feature>
<feature type="repeat" description="2">
    <location>
        <begin position="1053"/>
        <end position="1069"/>
    </location>
</feature>
<feature type="repeat" description="3">
    <location>
        <begin position="1070"/>
        <end position="1086"/>
    </location>
</feature>
<feature type="repeat" description="4">
    <location>
        <begin position="1087"/>
        <end position="1103"/>
    </location>
</feature>
<feature type="region of interest" description="Disordered" evidence="6">
    <location>
        <begin position="33"/>
        <end position="111"/>
    </location>
</feature>
<feature type="region of interest" description="Disordered" evidence="6">
    <location>
        <begin position="1028"/>
        <end position="1135"/>
    </location>
</feature>
<feature type="region of interest" description="4 X 17 AA tandem repeats">
    <location>
        <begin position="1036"/>
        <end position="1103"/>
    </location>
</feature>
<feature type="short sequence motif" description="LPXTG sorting signal" evidence="4">
    <location>
        <begin position="1129"/>
        <end position="1133"/>
    </location>
</feature>
<feature type="compositionally biased region" description="Polar residues" evidence="6">
    <location>
        <begin position="48"/>
        <end position="67"/>
    </location>
</feature>
<feature type="compositionally biased region" description="Basic and acidic residues" evidence="6">
    <location>
        <begin position="102"/>
        <end position="111"/>
    </location>
</feature>
<feature type="compositionally biased region" description="Basic and acidic residues" evidence="6">
    <location>
        <begin position="1033"/>
        <end position="1056"/>
    </location>
</feature>
<feature type="compositionally biased region" description="Basic and acidic residues" evidence="6">
    <location>
        <begin position="1063"/>
        <end position="1073"/>
    </location>
</feature>
<feature type="compositionally biased region" description="Basic and acidic residues" evidence="6">
    <location>
        <begin position="1080"/>
        <end position="1092"/>
    </location>
</feature>
<feature type="compositionally biased region" description="Polar residues" evidence="6">
    <location>
        <begin position="1093"/>
        <end position="1108"/>
    </location>
</feature>
<feature type="active site" description="Charge relay system" evidence="5">
    <location>
        <position position="132"/>
    </location>
</feature>
<feature type="active site" description="Charge relay system" evidence="5">
    <location>
        <position position="195"/>
    </location>
</feature>
<feature type="active site" description="Charge relay system" evidence="5">
    <location>
        <position position="514"/>
    </location>
</feature>
<feature type="modified residue" description="Pentaglycyl murein peptidoglycan amidated threonine" evidence="4">
    <location>
        <position position="1132"/>
    </location>
</feature>
<accession>P0DD34</accession>
<accession>Q79W61</accession>
<accession>Q8K5Q0</accession>
<reference key="1">
    <citation type="journal article" date="2002" name="Proc. Natl. Acad. Sci. U.S.A.">
        <title>Genome sequence of a serotype M3 strain of group A Streptococcus: phage-encoded toxins, the high-virulence phenotype, and clone emergence.</title>
        <authorList>
            <person name="Beres S.B."/>
            <person name="Sylva G.L."/>
            <person name="Barbian K.D."/>
            <person name="Lei B."/>
            <person name="Hoff J.S."/>
            <person name="Mammarella N.D."/>
            <person name="Liu M.-Y."/>
            <person name="Smoot J.C."/>
            <person name="Porcella S.F."/>
            <person name="Parkins L.D."/>
            <person name="Campbell D.S."/>
            <person name="Smith T.M."/>
            <person name="McCormick J.K."/>
            <person name="Leung D.Y.M."/>
            <person name="Schlievert P.M."/>
            <person name="Musser J.M."/>
        </authorList>
    </citation>
    <scope>NUCLEOTIDE SEQUENCE [LARGE SCALE GENOMIC DNA]</scope>
    <source>
        <strain>ATCC BAA-595 / MGAS315</strain>
    </source>
</reference>
<protein>
    <recommendedName>
        <fullName>C5a peptidase</fullName>
        <ecNumber evidence="2">3.4.21.110</ecNumber>
    </recommendedName>
    <alternativeName>
        <fullName>SCP</fullName>
    </alternativeName>
</protein>
<comment type="function">
    <text evidence="2">This virulence factor of S.pyogenes specifically cleaves the human serum chemotaxin C5a at '68-Lys-|-Asp-69' bond near its C-terminus, destroying its ability to serve as a chemoattractant.</text>
</comment>
<comment type="catalytic activity">
    <reaction evidence="2">
        <text>The primary cleavage site is at 67-His-|-Lys-68 in human C5a with a minor secondary cleavage site at 58-Ala-|-Ser-59.</text>
        <dbReference type="EC" id="3.4.21.110"/>
    </reaction>
</comment>
<comment type="subcellular location">
    <subcellularLocation>
        <location evidence="4">Secreted</location>
        <location evidence="4">Cell wall</location>
        <topology evidence="4">Peptidoglycan-anchor</topology>
    </subcellularLocation>
</comment>
<comment type="PTM">
    <text evidence="3">Cleaved by SpeB protease; leading to its degradation. Degradation by SpeB is probably strictly regulated to preserve integrity of C5a peptidase.</text>
</comment>
<comment type="similarity">
    <text evidence="7">Belongs to the peptidase S8 family.</text>
</comment>
<organism>
    <name type="scientific">Streptococcus pyogenes serotype M3 (strain ATCC BAA-595 / MGAS315)</name>
    <dbReference type="NCBI Taxonomy" id="198466"/>
    <lineage>
        <taxon>Bacteria</taxon>
        <taxon>Bacillati</taxon>
        <taxon>Bacillota</taxon>
        <taxon>Bacilli</taxon>
        <taxon>Lactobacillales</taxon>
        <taxon>Streptococcaceae</taxon>
        <taxon>Streptococcus</taxon>
    </lineage>
</organism>
<dbReference type="EC" id="3.4.21.110" evidence="2"/>
<dbReference type="EMBL" id="AE014074">
    <property type="protein sequence ID" value="AAM80333.1"/>
    <property type="molecule type" value="Genomic_DNA"/>
</dbReference>
<dbReference type="SMR" id="P0DD34"/>
<dbReference type="MEROPS" id="S08.020"/>
<dbReference type="KEGG" id="spg:SpyM3_1726"/>
<dbReference type="HOGENOM" id="CLU_001768_3_0_9"/>
<dbReference type="Proteomes" id="UP000000564">
    <property type="component" value="Chromosome"/>
</dbReference>
<dbReference type="GO" id="GO:0005576">
    <property type="term" value="C:extracellular region"/>
    <property type="evidence" value="ECO:0007669"/>
    <property type="project" value="UniProtKB-KW"/>
</dbReference>
<dbReference type="GO" id="GO:0016020">
    <property type="term" value="C:membrane"/>
    <property type="evidence" value="ECO:0007669"/>
    <property type="project" value="InterPro"/>
</dbReference>
<dbReference type="GO" id="GO:0004252">
    <property type="term" value="F:serine-type endopeptidase activity"/>
    <property type="evidence" value="ECO:0007669"/>
    <property type="project" value="InterPro"/>
</dbReference>
<dbReference type="GO" id="GO:0006508">
    <property type="term" value="P:proteolysis"/>
    <property type="evidence" value="ECO:0007669"/>
    <property type="project" value="UniProtKB-KW"/>
</dbReference>
<dbReference type="CDD" id="cd02133">
    <property type="entry name" value="PA_C5a_like"/>
    <property type="match status" value="1"/>
</dbReference>
<dbReference type="CDD" id="cd07475">
    <property type="entry name" value="Peptidases_S8_C5a_Peptidase"/>
    <property type="match status" value="1"/>
</dbReference>
<dbReference type="Gene3D" id="2.60.40.4070">
    <property type="match status" value="1"/>
</dbReference>
<dbReference type="Gene3D" id="3.50.30.30">
    <property type="match status" value="1"/>
</dbReference>
<dbReference type="Gene3D" id="2.60.40.10">
    <property type="entry name" value="Immunoglobulins"/>
    <property type="match status" value="1"/>
</dbReference>
<dbReference type="Gene3D" id="3.40.50.200">
    <property type="entry name" value="Peptidase S8/S53 domain"/>
    <property type="match status" value="1"/>
</dbReference>
<dbReference type="Gene3D" id="2.60.40.1710">
    <property type="entry name" value="Subtilisin-like superfamily"/>
    <property type="match status" value="1"/>
</dbReference>
<dbReference type="InterPro" id="IPR010435">
    <property type="entry name" value="C5a/SBT2-like_Fn3"/>
</dbReference>
<dbReference type="InterPro" id="IPR034216">
    <property type="entry name" value="C5a_Peptidase"/>
</dbReference>
<dbReference type="InterPro" id="IPR013783">
    <property type="entry name" value="Ig-like_fold"/>
</dbReference>
<dbReference type="InterPro" id="IPR019931">
    <property type="entry name" value="LPXTG_anchor"/>
</dbReference>
<dbReference type="InterPro" id="IPR046450">
    <property type="entry name" value="PA_dom_sf"/>
</dbReference>
<dbReference type="InterPro" id="IPR003137">
    <property type="entry name" value="PA_domain"/>
</dbReference>
<dbReference type="InterPro" id="IPR000209">
    <property type="entry name" value="Peptidase_S8/S53_dom"/>
</dbReference>
<dbReference type="InterPro" id="IPR036852">
    <property type="entry name" value="Peptidase_S8/S53_dom_sf"/>
</dbReference>
<dbReference type="InterPro" id="IPR023827">
    <property type="entry name" value="Peptidase_S8_Asp-AS"/>
</dbReference>
<dbReference type="InterPro" id="IPR022398">
    <property type="entry name" value="Peptidase_S8_His-AS"/>
</dbReference>
<dbReference type="InterPro" id="IPR023828">
    <property type="entry name" value="Peptidase_S8_Ser-AS"/>
</dbReference>
<dbReference type="InterPro" id="IPR050131">
    <property type="entry name" value="Peptidase_S8_subtilisin-like"/>
</dbReference>
<dbReference type="InterPro" id="IPR015500">
    <property type="entry name" value="Peptidase_S8_subtilisin-rel"/>
</dbReference>
<dbReference type="InterPro" id="IPR053869">
    <property type="entry name" value="ScpA_Fn3_3rd"/>
</dbReference>
<dbReference type="PANTHER" id="PTHR43806:SF11">
    <property type="entry name" value="CEREVISIN-RELATED"/>
    <property type="match status" value="1"/>
</dbReference>
<dbReference type="PANTHER" id="PTHR43806">
    <property type="entry name" value="PEPTIDASE S8"/>
    <property type="match status" value="1"/>
</dbReference>
<dbReference type="Pfam" id="PF13585">
    <property type="entry name" value="CHU_C"/>
    <property type="match status" value="1"/>
</dbReference>
<dbReference type="Pfam" id="PF06280">
    <property type="entry name" value="fn3_5"/>
    <property type="match status" value="1"/>
</dbReference>
<dbReference type="Pfam" id="PF02225">
    <property type="entry name" value="PA"/>
    <property type="match status" value="1"/>
</dbReference>
<dbReference type="Pfam" id="PF00082">
    <property type="entry name" value="Peptidase_S8"/>
    <property type="match status" value="1"/>
</dbReference>
<dbReference type="Pfam" id="PF22143">
    <property type="entry name" value="ScpA_C"/>
    <property type="match status" value="1"/>
</dbReference>
<dbReference type="PRINTS" id="PR00723">
    <property type="entry name" value="SUBTILISIN"/>
</dbReference>
<dbReference type="SUPFAM" id="SSF52025">
    <property type="entry name" value="PA domain"/>
    <property type="match status" value="1"/>
</dbReference>
<dbReference type="SUPFAM" id="SSF52743">
    <property type="entry name" value="Subtilisin-like"/>
    <property type="match status" value="1"/>
</dbReference>
<dbReference type="PROSITE" id="PS50847">
    <property type="entry name" value="GRAM_POS_ANCHORING"/>
    <property type="match status" value="1"/>
</dbReference>
<dbReference type="PROSITE" id="PS51892">
    <property type="entry name" value="SUBTILASE"/>
    <property type="match status" value="1"/>
</dbReference>
<dbReference type="PROSITE" id="PS00136">
    <property type="entry name" value="SUBTILASE_ASP"/>
    <property type="match status" value="1"/>
</dbReference>
<dbReference type="PROSITE" id="PS00137">
    <property type="entry name" value="SUBTILASE_HIS"/>
    <property type="match status" value="1"/>
</dbReference>
<dbReference type="PROSITE" id="PS00138">
    <property type="entry name" value="SUBTILASE_SER"/>
    <property type="match status" value="1"/>
</dbReference>
<sequence length="1169" mass="128228">MRKKQKLPFDKLAIALMSTSILLNAQSDIKANTVTEDTPATEQAVEVPQQTAVSEEAPSSSSKETNPPQTPDDAEETVADKANDLAPQAPAKTADIPATSKETIRDLNDPSHVKTLQEKAGKGAGTVVAVIDAGFDKNHEAWRLTDKSKARYQSKEDLEKAKKDHGITYGEWVNDKVAYYHDYSKDGKTAVDQEHGTHVSGILSGNAPSETKEPYRLEGAMPEAQLLLMRVEIVNGLADYARNYAQAIRDAVNLGAKVINMSFGNAALAYANLPDETKKAFDYAKSKGVSIVTSAGNDSSFGGKTRLPLADHPDYGVVGTPAAADSTLTVASYSPDKQLTETATVKTADQQDKEMPVLSTNRFEPNKAYDYAYANRGTKEDDFKDVKGKIALIERGDIDFKDKIANAKKAGAVGVLIYDNQDKGFPIELPNVDQMPAAFISRKDGLLLKDNSKKTITFNATPKVLPTASGTKLSRFSSWGLTADGNIKPDIAAPGQDILSSVANNKYAKLSGTSMSAPLVAGIMGLLQKQYETQYPDMTPSERLDLAKKVLMSSATALYDEDEKAYFSPRQQGAGAVDAKKASAATMYVTDKDNTSSKVHLNNVSDKFEVTVTVHNKSDKPQELYYQATVQTDKVDGKHFALAPKALYETSWQKITIPANSSKQVTVPIDASRFSKDLLAQMKNGYFLEGFVRFKQDPTKEELMSIPYIGFRGDFGNLSALEKPIYDSKDGSSYYHEANSDAKDQLDGDGLQFYALKNNFTALTTESNPWTIIKAVKEGVENIEDIESSEITETIFAGTFAKQDDDSHYYIHRHANGKPYAAISPNGDGNRDYVQFQGTFLRNAKNLVAEVLDKEGDVVWTSEVTEQVVKNYNNDLASTLGSTRFEKTRWDGKDKDGKVVANGTYTYRVRYTPISSGAKEQHTDFDVIVDNTTPEAATSATFSAEDRRLTLASKPKTSQPVYRERIAYTYMDEDLPTTEYISPNEDGTFTLPEEAETMEGATVPLKMSDFTYVVEDMAGNITYTPVTNLLEGHSNKPEQDGSDQVPDKTPETKPEQDGSGQAPDKKPEAKPEQDGSGQAPDKKPETKPEKDSSGQTPGKTPQKGQPSRTLEKRSSKRALATKASARDQLPTTNDKDTNRLHLLKLVMTTFFFGLVAHIFKTKRQKETKK</sequence>